<name>UPPP_SALPK</name>
<protein>
    <recommendedName>
        <fullName evidence="1">Undecaprenyl-diphosphatase</fullName>
        <ecNumber evidence="1">3.6.1.27</ecNumber>
    </recommendedName>
    <alternativeName>
        <fullName evidence="1">Bacitracin resistance protein</fullName>
    </alternativeName>
    <alternativeName>
        <fullName evidence="1">Undecaprenyl pyrophosphate phosphatase</fullName>
    </alternativeName>
</protein>
<proteinExistence type="inferred from homology"/>
<evidence type="ECO:0000255" key="1">
    <source>
        <dbReference type="HAMAP-Rule" id="MF_01006"/>
    </source>
</evidence>
<gene>
    <name evidence="1" type="primary">uppP</name>
    <name type="ordered locus">SSPA2869</name>
</gene>
<keyword id="KW-0046">Antibiotic resistance</keyword>
<keyword id="KW-0997">Cell inner membrane</keyword>
<keyword id="KW-1003">Cell membrane</keyword>
<keyword id="KW-0133">Cell shape</keyword>
<keyword id="KW-0961">Cell wall biogenesis/degradation</keyword>
<keyword id="KW-0378">Hydrolase</keyword>
<keyword id="KW-0472">Membrane</keyword>
<keyword id="KW-0573">Peptidoglycan synthesis</keyword>
<keyword id="KW-0812">Transmembrane</keyword>
<keyword id="KW-1133">Transmembrane helix</keyword>
<dbReference type="EC" id="3.6.1.27" evidence="1"/>
<dbReference type="EMBL" id="FM200053">
    <property type="protein sequence ID" value="CAR61116.1"/>
    <property type="molecule type" value="Genomic_DNA"/>
</dbReference>
<dbReference type="SMR" id="B5BG16"/>
<dbReference type="KEGG" id="sek:SSPA2869"/>
<dbReference type="HOGENOM" id="CLU_060296_2_0_6"/>
<dbReference type="Proteomes" id="UP000001869">
    <property type="component" value="Chromosome"/>
</dbReference>
<dbReference type="GO" id="GO:0005886">
    <property type="term" value="C:plasma membrane"/>
    <property type="evidence" value="ECO:0007669"/>
    <property type="project" value="UniProtKB-SubCell"/>
</dbReference>
<dbReference type="GO" id="GO:0050380">
    <property type="term" value="F:undecaprenyl-diphosphatase activity"/>
    <property type="evidence" value="ECO:0007669"/>
    <property type="project" value="UniProtKB-UniRule"/>
</dbReference>
<dbReference type="GO" id="GO:0071555">
    <property type="term" value="P:cell wall organization"/>
    <property type="evidence" value="ECO:0007669"/>
    <property type="project" value="UniProtKB-KW"/>
</dbReference>
<dbReference type="GO" id="GO:0009252">
    <property type="term" value="P:peptidoglycan biosynthetic process"/>
    <property type="evidence" value="ECO:0007669"/>
    <property type="project" value="UniProtKB-KW"/>
</dbReference>
<dbReference type="GO" id="GO:0008360">
    <property type="term" value="P:regulation of cell shape"/>
    <property type="evidence" value="ECO:0007669"/>
    <property type="project" value="UniProtKB-KW"/>
</dbReference>
<dbReference type="GO" id="GO:0046677">
    <property type="term" value="P:response to antibiotic"/>
    <property type="evidence" value="ECO:0007669"/>
    <property type="project" value="UniProtKB-UniRule"/>
</dbReference>
<dbReference type="HAMAP" id="MF_01006">
    <property type="entry name" value="Undec_diphosphatase"/>
    <property type="match status" value="1"/>
</dbReference>
<dbReference type="InterPro" id="IPR003824">
    <property type="entry name" value="UppP"/>
</dbReference>
<dbReference type="NCBIfam" id="NF001388">
    <property type="entry name" value="PRK00281.1-1"/>
    <property type="match status" value="1"/>
</dbReference>
<dbReference type="NCBIfam" id="NF001389">
    <property type="entry name" value="PRK00281.1-2"/>
    <property type="match status" value="1"/>
</dbReference>
<dbReference type="NCBIfam" id="NF001390">
    <property type="entry name" value="PRK00281.1-4"/>
    <property type="match status" value="1"/>
</dbReference>
<dbReference type="NCBIfam" id="TIGR00753">
    <property type="entry name" value="undec_PP_bacA"/>
    <property type="match status" value="1"/>
</dbReference>
<dbReference type="PANTHER" id="PTHR30622">
    <property type="entry name" value="UNDECAPRENYL-DIPHOSPHATASE"/>
    <property type="match status" value="1"/>
</dbReference>
<dbReference type="PANTHER" id="PTHR30622:SF3">
    <property type="entry name" value="UNDECAPRENYL-DIPHOSPHATASE"/>
    <property type="match status" value="1"/>
</dbReference>
<dbReference type="Pfam" id="PF02673">
    <property type="entry name" value="BacA"/>
    <property type="match status" value="1"/>
</dbReference>
<sequence length="273" mass="29764">MSDMHSLLIAAILGVVEGLTEFLPVSSTGHMIIVGHLLGFEGDTAKTFEVVIQLGSILAVVVMFWRQLFGLIGIHFGRPLQREGESKGRLTLIHILLGMIPAVVLGLVFHDTIKSLFNPINVMYALVVGGLLLIAAECLKPKEPRAPGLDDMTYRQAFMIGCFQCLALWPGFSRSGATISGGMLMGVSRYAASEFSFLLAVPMMMGATVLDLYKSWSFLTAADIPMFAVGFVTAFVVALIAIKTFLQLIKRISFIPFAIYRFVVAAAVYVVFF</sequence>
<comment type="function">
    <text evidence="1">Catalyzes the dephosphorylation of undecaprenyl diphosphate (UPP). Confers resistance to bacitracin.</text>
</comment>
<comment type="catalytic activity">
    <reaction evidence="1">
        <text>di-trans,octa-cis-undecaprenyl diphosphate + H2O = di-trans,octa-cis-undecaprenyl phosphate + phosphate + H(+)</text>
        <dbReference type="Rhea" id="RHEA:28094"/>
        <dbReference type="ChEBI" id="CHEBI:15377"/>
        <dbReference type="ChEBI" id="CHEBI:15378"/>
        <dbReference type="ChEBI" id="CHEBI:43474"/>
        <dbReference type="ChEBI" id="CHEBI:58405"/>
        <dbReference type="ChEBI" id="CHEBI:60392"/>
        <dbReference type="EC" id="3.6.1.27"/>
    </reaction>
</comment>
<comment type="subcellular location">
    <subcellularLocation>
        <location evidence="1">Cell inner membrane</location>
        <topology evidence="1">Multi-pass membrane protein</topology>
    </subcellularLocation>
</comment>
<comment type="miscellaneous">
    <text>Bacitracin is thought to be involved in the inhibition of peptidoglycan synthesis by sequestering undecaprenyl diphosphate, thereby reducing the pool of lipid carrier available.</text>
</comment>
<comment type="similarity">
    <text evidence="1">Belongs to the UppP family.</text>
</comment>
<accession>B5BG16</accession>
<reference key="1">
    <citation type="journal article" date="2009" name="BMC Genomics">
        <title>Pseudogene accumulation in the evolutionary histories of Salmonella enterica serovars Paratyphi A and Typhi.</title>
        <authorList>
            <person name="Holt K.E."/>
            <person name="Thomson N.R."/>
            <person name="Wain J."/>
            <person name="Langridge G.C."/>
            <person name="Hasan R."/>
            <person name="Bhutta Z.A."/>
            <person name="Quail M.A."/>
            <person name="Norbertczak H."/>
            <person name="Walker D."/>
            <person name="Simmonds M."/>
            <person name="White B."/>
            <person name="Bason N."/>
            <person name="Mungall K."/>
            <person name="Dougan G."/>
            <person name="Parkhill J."/>
        </authorList>
    </citation>
    <scope>NUCLEOTIDE SEQUENCE [LARGE SCALE GENOMIC DNA]</scope>
    <source>
        <strain>AKU_12601</strain>
    </source>
</reference>
<organism>
    <name type="scientific">Salmonella paratyphi A (strain AKU_12601)</name>
    <dbReference type="NCBI Taxonomy" id="554290"/>
    <lineage>
        <taxon>Bacteria</taxon>
        <taxon>Pseudomonadati</taxon>
        <taxon>Pseudomonadota</taxon>
        <taxon>Gammaproteobacteria</taxon>
        <taxon>Enterobacterales</taxon>
        <taxon>Enterobacteriaceae</taxon>
        <taxon>Salmonella</taxon>
    </lineage>
</organism>
<feature type="chain" id="PRO_1000197402" description="Undecaprenyl-diphosphatase">
    <location>
        <begin position="1"/>
        <end position="273"/>
    </location>
</feature>
<feature type="transmembrane region" description="Helical" evidence="1">
    <location>
        <begin position="54"/>
        <end position="74"/>
    </location>
</feature>
<feature type="transmembrane region" description="Helical" evidence="1">
    <location>
        <begin position="90"/>
        <end position="110"/>
    </location>
</feature>
<feature type="transmembrane region" description="Helical" evidence="1">
    <location>
        <begin position="116"/>
        <end position="136"/>
    </location>
</feature>
<feature type="transmembrane region" description="Helical" evidence="1">
    <location>
        <begin position="156"/>
        <end position="178"/>
    </location>
</feature>
<feature type="transmembrane region" description="Helical" evidence="1">
    <location>
        <begin position="190"/>
        <end position="210"/>
    </location>
</feature>
<feature type="transmembrane region" description="Helical" evidence="1">
    <location>
        <begin position="222"/>
        <end position="242"/>
    </location>
</feature>
<feature type="transmembrane region" description="Helical" evidence="1">
    <location>
        <begin position="252"/>
        <end position="272"/>
    </location>
</feature>